<sequence>MAQSSPQLDIQVLNDLQQRFPEIPRDVVSQCMLQNNSNLDACYRALTQESCKYLYMDYHNLDETRMNSNLLHINLGIHPSSTYHTGDGAQVNGRPLVHSSSDGHIDPQRSPGKLLCLVPEPQSAPAVVAQNYNQFFLNDQNRNSPTPPPQPVQQPGVGTSAMQASLPTYMHVPRYSANPITVTVSPSGHNVPRALQIVPQVQNNPYGTPIYIRHPSQNSPGRQTQQNTAWPPSPQAVLPHYNPCPPYPQSFQPTQYSPKQPQIPQSAFRSPPTSQCTSPYSSPQHQVQTNQLSHQTSHVFLPPSPSTVSPHLYQQAPPPYPKQSSLGYLPYGPGLNKGPMNKIEITVESQQRPGPTLNRSPSPINNQSAQRSQQHPVYVSNARSGSPSRGIPTQPKASYSGSPLFITYSQPPTTTGSPTPSSRVVMSPSNPTVFKITVGRAPTENLLNIVDQEQHPSTPEPIQPISLLPVSGGDKGIHKYHRSSSSGSDDYAYTQALLLHQRARMERLAKELKHEKEELERLKAEVNGMEHDLMQRRLRRVSCTTAIPTPEEMTRLRGLNRQLQINVDCTQKEIDLLQSRGMAKLDVKAMSNFYDNLSPGPAVPPNTCKKESSETTSGERKARRISVTSKIKSDPPDLQAPSSLDIGPWQRASPRPGRDEDFEGSPWNCNSCTFLNHPALNRCEQCEMPRFT</sequence>
<dbReference type="EMBL" id="BC044992">
    <property type="protein sequence ID" value="AAH44992.1"/>
    <property type="molecule type" value="mRNA"/>
</dbReference>
<dbReference type="RefSeq" id="NP_001079583.1">
    <property type="nucleotide sequence ID" value="NM_001086114.1"/>
</dbReference>
<dbReference type="RefSeq" id="XP_018100242.1">
    <property type="nucleotide sequence ID" value="XM_018244753.1"/>
</dbReference>
<dbReference type="RefSeq" id="XP_018100243.1">
    <property type="nucleotide sequence ID" value="XM_018244754.1"/>
</dbReference>
<dbReference type="RefSeq" id="XP_018100244.1">
    <property type="nucleotide sequence ID" value="XM_018244755.1"/>
</dbReference>
<dbReference type="RefSeq" id="XP_018100245.1">
    <property type="nucleotide sequence ID" value="XM_018244756.1"/>
</dbReference>
<dbReference type="RefSeq" id="XP_018100246.1">
    <property type="nucleotide sequence ID" value="XM_018244757.1"/>
</dbReference>
<dbReference type="SMR" id="Q7ZXH3"/>
<dbReference type="DNASU" id="379270"/>
<dbReference type="GeneID" id="379270"/>
<dbReference type="KEGG" id="xla:379270"/>
<dbReference type="AGR" id="Xenbase:XB-GENE-942655"/>
<dbReference type="CTD" id="379270"/>
<dbReference type="Xenbase" id="XB-GENE-942655">
    <property type="gene designation" value="tab3.L"/>
</dbReference>
<dbReference type="OMA" id="PAWRSEQ"/>
<dbReference type="OrthoDB" id="6288762at2759"/>
<dbReference type="Proteomes" id="UP000186698">
    <property type="component" value="Chromosome 2L"/>
</dbReference>
<dbReference type="Bgee" id="379270">
    <property type="expression patterns" value="Expressed in egg cell and 19 other cell types or tissues"/>
</dbReference>
<dbReference type="GO" id="GO:0070062">
    <property type="term" value="C:extracellular exosome"/>
    <property type="evidence" value="ECO:0007669"/>
    <property type="project" value="TreeGrafter"/>
</dbReference>
<dbReference type="GO" id="GO:0043130">
    <property type="term" value="F:ubiquitin binding"/>
    <property type="evidence" value="ECO:0007669"/>
    <property type="project" value="InterPro"/>
</dbReference>
<dbReference type="GO" id="GO:0008270">
    <property type="term" value="F:zinc ion binding"/>
    <property type="evidence" value="ECO:0007669"/>
    <property type="project" value="UniProtKB-KW"/>
</dbReference>
<dbReference type="GO" id="GO:0043123">
    <property type="term" value="P:positive regulation of canonical NF-kappaB signal transduction"/>
    <property type="evidence" value="ECO:0000318"/>
    <property type="project" value="GO_Central"/>
</dbReference>
<dbReference type="CDD" id="cd14362">
    <property type="entry name" value="CUE_TAB2_TAB3"/>
    <property type="match status" value="1"/>
</dbReference>
<dbReference type="Gene3D" id="1.10.8.10">
    <property type="entry name" value="DNA helicase RuvA subunit, C-terminal domain"/>
    <property type="match status" value="1"/>
</dbReference>
<dbReference type="Gene3D" id="2.30.30.380">
    <property type="entry name" value="Zn-finger domain of Sec23/24"/>
    <property type="match status" value="1"/>
</dbReference>
<dbReference type="InterPro" id="IPR003892">
    <property type="entry name" value="CUE"/>
</dbReference>
<dbReference type="InterPro" id="IPR041911">
    <property type="entry name" value="TAB2/3_CUE"/>
</dbReference>
<dbReference type="InterPro" id="IPR001876">
    <property type="entry name" value="Znf_RanBP2"/>
</dbReference>
<dbReference type="InterPro" id="IPR036443">
    <property type="entry name" value="Znf_RanBP2_sf"/>
</dbReference>
<dbReference type="PANTHER" id="PTHR46253:SF3">
    <property type="entry name" value="TGF-BETA-ACTIVATED KINASE 1 AND MAP3K7-BINDING PROTEIN 3"/>
    <property type="match status" value="1"/>
</dbReference>
<dbReference type="PANTHER" id="PTHR46253">
    <property type="entry name" value="TGF-BETA-ACTIVATED KINASE 1 AND MAP3K7-BINDING PROTEIN TAB"/>
    <property type="match status" value="1"/>
</dbReference>
<dbReference type="Pfam" id="PF02845">
    <property type="entry name" value="CUE"/>
    <property type="match status" value="1"/>
</dbReference>
<dbReference type="SMART" id="SM00546">
    <property type="entry name" value="CUE"/>
    <property type="match status" value="1"/>
</dbReference>
<dbReference type="SMART" id="SM00547">
    <property type="entry name" value="ZnF_RBZ"/>
    <property type="match status" value="1"/>
</dbReference>
<dbReference type="SUPFAM" id="SSF90209">
    <property type="entry name" value="Ran binding protein zinc finger-like"/>
    <property type="match status" value="1"/>
</dbReference>
<dbReference type="PROSITE" id="PS51140">
    <property type="entry name" value="CUE"/>
    <property type="match status" value="1"/>
</dbReference>
<dbReference type="PROSITE" id="PS01358">
    <property type="entry name" value="ZF_RANBP2_1"/>
    <property type="match status" value="1"/>
</dbReference>
<dbReference type="PROSITE" id="PS50199">
    <property type="entry name" value="ZF_RANBP2_2"/>
    <property type="match status" value="1"/>
</dbReference>
<evidence type="ECO:0000255" key="1"/>
<evidence type="ECO:0000255" key="2">
    <source>
        <dbReference type="PROSITE-ProRule" id="PRU00322"/>
    </source>
</evidence>
<evidence type="ECO:0000255" key="3">
    <source>
        <dbReference type="PROSITE-ProRule" id="PRU00468"/>
    </source>
</evidence>
<evidence type="ECO:0000256" key="4">
    <source>
        <dbReference type="SAM" id="MobiDB-lite"/>
    </source>
</evidence>
<comment type="function">
    <text>May play a role in signaling pathway.</text>
</comment>
<feature type="chain" id="PRO_0000226974" description="Mitogen-activated protein kinase kinase kinase 7-interacting protein 3 homolog">
    <location>
        <begin position="1"/>
        <end position="692"/>
    </location>
</feature>
<feature type="domain" description="CUE" evidence="3">
    <location>
        <begin position="8"/>
        <end position="51"/>
    </location>
</feature>
<feature type="zinc finger region" description="RanBP2-type" evidence="2">
    <location>
        <begin position="662"/>
        <end position="692"/>
    </location>
</feature>
<feature type="region of interest" description="Disordered" evidence="4">
    <location>
        <begin position="138"/>
        <end position="159"/>
    </location>
</feature>
<feature type="region of interest" description="Disordered" evidence="4">
    <location>
        <begin position="206"/>
        <end position="333"/>
    </location>
</feature>
<feature type="region of interest" description="Disordered" evidence="4">
    <location>
        <begin position="349"/>
        <end position="427"/>
    </location>
</feature>
<feature type="region of interest" description="Disordered" evidence="4">
    <location>
        <begin position="598"/>
        <end position="662"/>
    </location>
</feature>
<feature type="coiled-coil region" evidence="1">
    <location>
        <begin position="496"/>
        <end position="580"/>
    </location>
</feature>
<feature type="compositionally biased region" description="Polar residues" evidence="4">
    <location>
        <begin position="215"/>
        <end position="230"/>
    </location>
</feature>
<feature type="compositionally biased region" description="Polar residues" evidence="4">
    <location>
        <begin position="249"/>
        <end position="298"/>
    </location>
</feature>
<feature type="compositionally biased region" description="Polar residues" evidence="4">
    <location>
        <begin position="349"/>
        <end position="387"/>
    </location>
</feature>
<feature type="compositionally biased region" description="Low complexity" evidence="4">
    <location>
        <begin position="409"/>
        <end position="422"/>
    </location>
</feature>
<feature type="compositionally biased region" description="Basic and acidic residues" evidence="4">
    <location>
        <begin position="608"/>
        <end position="620"/>
    </location>
</feature>
<organism>
    <name type="scientific">Xenopus laevis</name>
    <name type="common">African clawed frog</name>
    <dbReference type="NCBI Taxonomy" id="8355"/>
    <lineage>
        <taxon>Eukaryota</taxon>
        <taxon>Metazoa</taxon>
        <taxon>Chordata</taxon>
        <taxon>Craniata</taxon>
        <taxon>Vertebrata</taxon>
        <taxon>Euteleostomi</taxon>
        <taxon>Amphibia</taxon>
        <taxon>Batrachia</taxon>
        <taxon>Anura</taxon>
        <taxon>Pipoidea</taxon>
        <taxon>Pipidae</taxon>
        <taxon>Xenopodinae</taxon>
        <taxon>Xenopus</taxon>
        <taxon>Xenopus</taxon>
    </lineage>
</organism>
<accession>Q7ZXH3</accession>
<gene>
    <name type="primary">map3k7ip3</name>
</gene>
<protein>
    <recommendedName>
        <fullName>Mitogen-activated protein kinase kinase kinase 7-interacting protein 3 homolog</fullName>
    </recommendedName>
</protein>
<reference key="1">
    <citation type="submission" date="2003-01" db="EMBL/GenBank/DDBJ databases">
        <authorList>
            <consortium name="NIH - Xenopus Gene Collection (XGC) project"/>
        </authorList>
    </citation>
    <scope>NUCLEOTIDE SEQUENCE [LARGE SCALE MRNA]</scope>
    <source>
        <tissue>Embryo</tissue>
    </source>
</reference>
<proteinExistence type="evidence at transcript level"/>
<keyword id="KW-0175">Coiled coil</keyword>
<keyword id="KW-0479">Metal-binding</keyword>
<keyword id="KW-1185">Reference proteome</keyword>
<keyword id="KW-0862">Zinc</keyword>
<keyword id="KW-0863">Zinc-finger</keyword>
<name>TAB3_XENLA</name>